<comment type="catalytic activity">
    <reaction evidence="1">
        <text>tRNA(Phe) + L-phenylalanine + ATP = L-phenylalanyl-tRNA(Phe) + AMP + diphosphate + H(+)</text>
        <dbReference type="Rhea" id="RHEA:19413"/>
        <dbReference type="Rhea" id="RHEA-COMP:9668"/>
        <dbReference type="Rhea" id="RHEA-COMP:9699"/>
        <dbReference type="ChEBI" id="CHEBI:15378"/>
        <dbReference type="ChEBI" id="CHEBI:30616"/>
        <dbReference type="ChEBI" id="CHEBI:33019"/>
        <dbReference type="ChEBI" id="CHEBI:58095"/>
        <dbReference type="ChEBI" id="CHEBI:78442"/>
        <dbReference type="ChEBI" id="CHEBI:78531"/>
        <dbReference type="ChEBI" id="CHEBI:456215"/>
        <dbReference type="EC" id="6.1.1.20"/>
    </reaction>
</comment>
<comment type="cofactor">
    <cofactor evidence="1">
        <name>Mg(2+)</name>
        <dbReference type="ChEBI" id="CHEBI:18420"/>
    </cofactor>
    <text evidence="1">Binds 2 magnesium ions per tetramer.</text>
</comment>
<comment type="subunit">
    <text evidence="1">Tetramer of two alpha and two beta subunits.</text>
</comment>
<comment type="subcellular location">
    <subcellularLocation>
        <location>Cytoplasm</location>
    </subcellularLocation>
</comment>
<comment type="similarity">
    <text evidence="1">Belongs to the class-II aminoacyl-tRNA synthetase family. Phe-tRNA synthetase alpha subunit type 1 subfamily.</text>
</comment>
<reference key="1">
    <citation type="journal article" date="2001" name="Protein Expr. Purif.">
        <title>Identification, cloning, and expression of a functional phenylalanyl-tRNA synthetase (pheRS) from Staphylococcus aureus.</title>
        <authorList>
            <person name="Savopoulos J.W."/>
            <person name="Hibbs M."/>
            <person name="Jones E.J."/>
            <person name="Mensah L."/>
            <person name="Richardson C."/>
            <person name="Fosberry A."/>
            <person name="Downes R."/>
            <person name="Fox S.G."/>
            <person name="Brown J.R."/>
            <person name="Jenkins O."/>
        </authorList>
    </citation>
    <scope>NUCLEOTIDE SEQUENCE [GENOMIC DNA]</scope>
    <source>
        <strain>WCUH29 / NCIMB 40771</strain>
    </source>
</reference>
<dbReference type="EC" id="6.1.1.20" evidence="1"/>
<dbReference type="EMBL" id="AF327740">
    <property type="protein sequence ID" value="AAK15704.1"/>
    <property type="molecule type" value="Genomic_DNA"/>
</dbReference>
<dbReference type="RefSeq" id="WP_000003566.1">
    <property type="nucleotide sequence ID" value="NZ_WYDB01000003.1"/>
</dbReference>
<dbReference type="SMR" id="P68849"/>
<dbReference type="BindingDB" id="P68849"/>
<dbReference type="ChEMBL" id="CHEMBL3436"/>
<dbReference type="OMA" id="EIMGCGM"/>
<dbReference type="GO" id="GO:0005737">
    <property type="term" value="C:cytoplasm"/>
    <property type="evidence" value="ECO:0007669"/>
    <property type="project" value="UniProtKB-SubCell"/>
</dbReference>
<dbReference type="GO" id="GO:0005524">
    <property type="term" value="F:ATP binding"/>
    <property type="evidence" value="ECO:0007669"/>
    <property type="project" value="UniProtKB-UniRule"/>
</dbReference>
<dbReference type="GO" id="GO:0140096">
    <property type="term" value="F:catalytic activity, acting on a protein"/>
    <property type="evidence" value="ECO:0007669"/>
    <property type="project" value="UniProtKB-ARBA"/>
</dbReference>
<dbReference type="GO" id="GO:0000287">
    <property type="term" value="F:magnesium ion binding"/>
    <property type="evidence" value="ECO:0007669"/>
    <property type="project" value="UniProtKB-UniRule"/>
</dbReference>
<dbReference type="GO" id="GO:0004826">
    <property type="term" value="F:phenylalanine-tRNA ligase activity"/>
    <property type="evidence" value="ECO:0007669"/>
    <property type="project" value="UniProtKB-UniRule"/>
</dbReference>
<dbReference type="GO" id="GO:0016740">
    <property type="term" value="F:transferase activity"/>
    <property type="evidence" value="ECO:0007669"/>
    <property type="project" value="UniProtKB-ARBA"/>
</dbReference>
<dbReference type="GO" id="GO:0000049">
    <property type="term" value="F:tRNA binding"/>
    <property type="evidence" value="ECO:0007669"/>
    <property type="project" value="InterPro"/>
</dbReference>
<dbReference type="GO" id="GO:0006432">
    <property type="term" value="P:phenylalanyl-tRNA aminoacylation"/>
    <property type="evidence" value="ECO:0007669"/>
    <property type="project" value="UniProtKB-UniRule"/>
</dbReference>
<dbReference type="CDD" id="cd00496">
    <property type="entry name" value="PheRS_alpha_core"/>
    <property type="match status" value="1"/>
</dbReference>
<dbReference type="FunFam" id="3.30.930.10:FF:000003">
    <property type="entry name" value="Phenylalanine--tRNA ligase alpha subunit"/>
    <property type="match status" value="1"/>
</dbReference>
<dbReference type="Gene3D" id="3.30.930.10">
    <property type="entry name" value="Bira Bifunctional Protein, Domain 2"/>
    <property type="match status" value="1"/>
</dbReference>
<dbReference type="HAMAP" id="MF_00281">
    <property type="entry name" value="Phe_tRNA_synth_alpha1"/>
    <property type="match status" value="1"/>
</dbReference>
<dbReference type="InterPro" id="IPR006195">
    <property type="entry name" value="aa-tRNA-synth_II"/>
</dbReference>
<dbReference type="InterPro" id="IPR045864">
    <property type="entry name" value="aa-tRNA-synth_II/BPL/LPL"/>
</dbReference>
<dbReference type="InterPro" id="IPR004529">
    <property type="entry name" value="Phe-tRNA-synth_IIc_asu"/>
</dbReference>
<dbReference type="InterPro" id="IPR004188">
    <property type="entry name" value="Phe-tRNA_ligase_II_N"/>
</dbReference>
<dbReference type="InterPro" id="IPR022911">
    <property type="entry name" value="Phe_tRNA_ligase_alpha1_bac"/>
</dbReference>
<dbReference type="InterPro" id="IPR002319">
    <property type="entry name" value="Phenylalanyl-tRNA_Synthase"/>
</dbReference>
<dbReference type="InterPro" id="IPR010978">
    <property type="entry name" value="tRNA-bd_arm"/>
</dbReference>
<dbReference type="NCBIfam" id="TIGR00468">
    <property type="entry name" value="pheS"/>
    <property type="match status" value="1"/>
</dbReference>
<dbReference type="PANTHER" id="PTHR11538:SF41">
    <property type="entry name" value="PHENYLALANINE--TRNA LIGASE, MITOCHONDRIAL"/>
    <property type="match status" value="1"/>
</dbReference>
<dbReference type="PANTHER" id="PTHR11538">
    <property type="entry name" value="PHENYLALANYL-TRNA SYNTHETASE"/>
    <property type="match status" value="1"/>
</dbReference>
<dbReference type="Pfam" id="PF02912">
    <property type="entry name" value="Phe_tRNA-synt_N"/>
    <property type="match status" value="1"/>
</dbReference>
<dbReference type="Pfam" id="PF01409">
    <property type="entry name" value="tRNA-synt_2d"/>
    <property type="match status" value="1"/>
</dbReference>
<dbReference type="SUPFAM" id="SSF55681">
    <property type="entry name" value="Class II aaRS and biotin synthetases"/>
    <property type="match status" value="1"/>
</dbReference>
<dbReference type="SUPFAM" id="SSF46589">
    <property type="entry name" value="tRNA-binding arm"/>
    <property type="match status" value="1"/>
</dbReference>
<dbReference type="PROSITE" id="PS50862">
    <property type="entry name" value="AA_TRNA_LIGASE_II"/>
    <property type="match status" value="1"/>
</dbReference>
<gene>
    <name evidence="1" type="primary">pheS</name>
</gene>
<accession>P68849</accession>
<accession>Q99QR1</accession>
<organism>
    <name type="scientific">Staphylococcus aureus</name>
    <dbReference type="NCBI Taxonomy" id="1280"/>
    <lineage>
        <taxon>Bacteria</taxon>
        <taxon>Bacillati</taxon>
        <taxon>Bacillota</taxon>
        <taxon>Bacilli</taxon>
        <taxon>Bacillales</taxon>
        <taxon>Staphylococcaceae</taxon>
        <taxon>Staphylococcus</taxon>
    </lineage>
</organism>
<name>SYFA_STAAU</name>
<keyword id="KW-0030">Aminoacyl-tRNA synthetase</keyword>
<keyword id="KW-0067">ATP-binding</keyword>
<keyword id="KW-0963">Cytoplasm</keyword>
<keyword id="KW-0436">Ligase</keyword>
<keyword id="KW-0460">Magnesium</keyword>
<keyword id="KW-0479">Metal-binding</keyword>
<keyword id="KW-0547">Nucleotide-binding</keyword>
<keyword id="KW-0648">Protein biosynthesis</keyword>
<protein>
    <recommendedName>
        <fullName evidence="1">Phenylalanine--tRNA ligase alpha subunit</fullName>
        <ecNumber evidence="1">6.1.1.20</ecNumber>
    </recommendedName>
    <alternativeName>
        <fullName evidence="1">Phenylalanyl-tRNA synthetase alpha subunit</fullName>
        <shortName evidence="1">PheRS</shortName>
    </alternativeName>
</protein>
<sequence>MSEQQTMSELKQQALVDINEANDERALQEVKVKYLGKKGSVSGLMKLMKDLPNEEKPAFGQKVNELRQTIQNELDERQQMLVKEKLNKQLAEETIDVSLPGRHIEIGSKHPLTRTIEEIEDLFLGLGYEIVNGYEVEQDHYNFEMLNLPKSHPARDMQDSFYITDEILLRTHTSPVQARTMESRHGQGPVKIICPGKVYRRDSDDATHSHQFTQIEGLVVDKNVKMSDLKGTLELLAKKLFGADREIRLRPSYFPFTEPSVEVDVSCFKCKGKGCNVCKHTGWIEILGAGMVHPNVLEMAGFDSSEYSGFAFGMGPDRIAMLKYGIEDIRHFYTNDVRFLDQFKAVEDRGDM</sequence>
<evidence type="ECO:0000255" key="1">
    <source>
        <dbReference type="HAMAP-Rule" id="MF_00281"/>
    </source>
</evidence>
<feature type="chain" id="PRO_0000126764" description="Phenylalanine--tRNA ligase alpha subunit">
    <location>
        <begin position="1"/>
        <end position="352"/>
    </location>
</feature>
<feature type="binding site" evidence="1">
    <location>
        <position position="258"/>
    </location>
    <ligand>
        <name>Mg(2+)</name>
        <dbReference type="ChEBI" id="CHEBI:18420"/>
        <note>shared with beta subunit</note>
    </ligand>
</feature>
<proteinExistence type="inferred from homology"/>